<name>PANB_SODGM</name>
<evidence type="ECO:0000255" key="1">
    <source>
        <dbReference type="HAMAP-Rule" id="MF_00156"/>
    </source>
</evidence>
<sequence length="262" mass="27818">MTTISHLRKWKQQQRKFTSITAYDAAFARLFAEQGIKVMLVGDSLGMTMQGHDSTLPVTLEDMVYHTRCVRRGAPSCLLLADLPFMSYATPAQTFENAAALMRAGANMVKLEGGAWLADTVNGLTARAVPVCGHLGLTPQSVNIFGGYKIQGRDAVGADQLLADARTLEQAGAQLLVLECVPVALAERVTHELSIPVIGIGAGAVTDGQILVMQDALGITGDSAPSFAKDFLAAGGDIAAAVRRYVQEVETGQFPAAEHSFQ</sequence>
<reference key="1">
    <citation type="journal article" date="2006" name="Genome Res.">
        <title>Massive genome erosion and functional adaptations provide insights into the symbiotic lifestyle of Sodalis glossinidius in the tsetse host.</title>
        <authorList>
            <person name="Toh H."/>
            <person name="Weiss B.L."/>
            <person name="Perkin S.A.H."/>
            <person name="Yamashita A."/>
            <person name="Oshima K."/>
            <person name="Hattori M."/>
            <person name="Aksoy S."/>
        </authorList>
    </citation>
    <scope>NUCLEOTIDE SEQUENCE [LARGE SCALE GENOMIC DNA]</scope>
    <source>
        <strain>morsitans</strain>
    </source>
</reference>
<gene>
    <name evidence="1" type="primary">panB</name>
    <name type="ordered locus">SG0488</name>
</gene>
<accession>Q2NVR2</accession>
<organism>
    <name type="scientific">Sodalis glossinidius (strain morsitans)</name>
    <dbReference type="NCBI Taxonomy" id="343509"/>
    <lineage>
        <taxon>Bacteria</taxon>
        <taxon>Pseudomonadati</taxon>
        <taxon>Pseudomonadota</taxon>
        <taxon>Gammaproteobacteria</taxon>
        <taxon>Enterobacterales</taxon>
        <taxon>Bruguierivoracaceae</taxon>
        <taxon>Sodalis</taxon>
    </lineage>
</organism>
<comment type="function">
    <text evidence="1">Catalyzes the reversible reaction in which hydroxymethyl group from 5,10-methylenetetrahydrofolate is transferred onto alpha-ketoisovalerate to form ketopantoate.</text>
</comment>
<comment type="catalytic activity">
    <reaction evidence="1">
        <text>3-methyl-2-oxobutanoate + (6R)-5,10-methylene-5,6,7,8-tetrahydrofolate + H2O = 2-dehydropantoate + (6S)-5,6,7,8-tetrahydrofolate</text>
        <dbReference type="Rhea" id="RHEA:11824"/>
        <dbReference type="ChEBI" id="CHEBI:11561"/>
        <dbReference type="ChEBI" id="CHEBI:11851"/>
        <dbReference type="ChEBI" id="CHEBI:15377"/>
        <dbReference type="ChEBI" id="CHEBI:15636"/>
        <dbReference type="ChEBI" id="CHEBI:57453"/>
        <dbReference type="EC" id="2.1.2.11"/>
    </reaction>
</comment>
<comment type="cofactor">
    <cofactor evidence="1">
        <name>Mg(2+)</name>
        <dbReference type="ChEBI" id="CHEBI:18420"/>
    </cofactor>
    <text evidence="1">Binds 1 Mg(2+) ion per subunit.</text>
</comment>
<comment type="pathway">
    <text evidence="1">Cofactor biosynthesis; (R)-pantothenate biosynthesis; (R)-pantoate from 3-methyl-2-oxobutanoate: step 1/2.</text>
</comment>
<comment type="subunit">
    <text evidence="1">Homodecamer; pentamer of dimers.</text>
</comment>
<comment type="subcellular location">
    <subcellularLocation>
        <location evidence="1">Cytoplasm</location>
    </subcellularLocation>
</comment>
<comment type="similarity">
    <text evidence="1">Belongs to the PanB family.</text>
</comment>
<keyword id="KW-0963">Cytoplasm</keyword>
<keyword id="KW-0460">Magnesium</keyword>
<keyword id="KW-0479">Metal-binding</keyword>
<keyword id="KW-0566">Pantothenate biosynthesis</keyword>
<keyword id="KW-0808">Transferase</keyword>
<protein>
    <recommendedName>
        <fullName evidence="1">3-methyl-2-oxobutanoate hydroxymethyltransferase</fullName>
        <ecNumber evidence="1">2.1.2.11</ecNumber>
    </recommendedName>
    <alternativeName>
        <fullName evidence="1">Ketopantoate hydroxymethyltransferase</fullName>
        <shortName evidence="1">KPHMT</shortName>
    </alternativeName>
</protein>
<feature type="chain" id="PRO_0000297381" description="3-methyl-2-oxobutanoate hydroxymethyltransferase">
    <location>
        <begin position="1"/>
        <end position="262"/>
    </location>
</feature>
<feature type="active site" description="Proton acceptor" evidence="1">
    <location>
        <position position="179"/>
    </location>
</feature>
<feature type="binding site" evidence="1">
    <location>
        <begin position="43"/>
        <end position="44"/>
    </location>
    <ligand>
        <name>3-methyl-2-oxobutanoate</name>
        <dbReference type="ChEBI" id="CHEBI:11851"/>
    </ligand>
</feature>
<feature type="binding site" evidence="1">
    <location>
        <position position="43"/>
    </location>
    <ligand>
        <name>Mg(2+)</name>
        <dbReference type="ChEBI" id="CHEBI:18420"/>
    </ligand>
</feature>
<feature type="binding site" evidence="1">
    <location>
        <position position="82"/>
    </location>
    <ligand>
        <name>3-methyl-2-oxobutanoate</name>
        <dbReference type="ChEBI" id="CHEBI:11851"/>
    </ligand>
</feature>
<feature type="binding site" evidence="1">
    <location>
        <position position="82"/>
    </location>
    <ligand>
        <name>Mg(2+)</name>
        <dbReference type="ChEBI" id="CHEBI:18420"/>
    </ligand>
</feature>
<feature type="binding site" evidence="1">
    <location>
        <position position="110"/>
    </location>
    <ligand>
        <name>3-methyl-2-oxobutanoate</name>
        <dbReference type="ChEBI" id="CHEBI:11851"/>
    </ligand>
</feature>
<feature type="binding site" evidence="1">
    <location>
        <position position="112"/>
    </location>
    <ligand>
        <name>Mg(2+)</name>
        <dbReference type="ChEBI" id="CHEBI:18420"/>
    </ligand>
</feature>
<proteinExistence type="inferred from homology"/>
<dbReference type="EC" id="2.1.2.11" evidence="1"/>
<dbReference type="EMBL" id="AP008232">
    <property type="protein sequence ID" value="BAE73763.1"/>
    <property type="molecule type" value="Genomic_DNA"/>
</dbReference>
<dbReference type="RefSeq" id="WP_011410461.1">
    <property type="nucleotide sequence ID" value="NC_007712.1"/>
</dbReference>
<dbReference type="SMR" id="Q2NVR2"/>
<dbReference type="STRING" id="343509.SG0488"/>
<dbReference type="KEGG" id="sgl:SG0488"/>
<dbReference type="eggNOG" id="COG0413">
    <property type="taxonomic scope" value="Bacteria"/>
</dbReference>
<dbReference type="HOGENOM" id="CLU_036645_1_0_6"/>
<dbReference type="OrthoDB" id="9781789at2"/>
<dbReference type="BioCyc" id="SGLO343509:SGP1_RS04355-MONOMER"/>
<dbReference type="UniPathway" id="UPA00028">
    <property type="reaction ID" value="UER00003"/>
</dbReference>
<dbReference type="Proteomes" id="UP000001932">
    <property type="component" value="Chromosome"/>
</dbReference>
<dbReference type="GO" id="GO:0005737">
    <property type="term" value="C:cytoplasm"/>
    <property type="evidence" value="ECO:0007669"/>
    <property type="project" value="UniProtKB-SubCell"/>
</dbReference>
<dbReference type="GO" id="GO:0003864">
    <property type="term" value="F:3-methyl-2-oxobutanoate hydroxymethyltransferase activity"/>
    <property type="evidence" value="ECO:0007669"/>
    <property type="project" value="UniProtKB-UniRule"/>
</dbReference>
<dbReference type="GO" id="GO:0000287">
    <property type="term" value="F:magnesium ion binding"/>
    <property type="evidence" value="ECO:0007669"/>
    <property type="project" value="TreeGrafter"/>
</dbReference>
<dbReference type="GO" id="GO:0015940">
    <property type="term" value="P:pantothenate biosynthetic process"/>
    <property type="evidence" value="ECO:0007669"/>
    <property type="project" value="UniProtKB-UniRule"/>
</dbReference>
<dbReference type="CDD" id="cd06557">
    <property type="entry name" value="KPHMT-like"/>
    <property type="match status" value="1"/>
</dbReference>
<dbReference type="FunFam" id="3.20.20.60:FF:000003">
    <property type="entry name" value="3-methyl-2-oxobutanoate hydroxymethyltransferase"/>
    <property type="match status" value="1"/>
</dbReference>
<dbReference type="Gene3D" id="3.20.20.60">
    <property type="entry name" value="Phosphoenolpyruvate-binding domains"/>
    <property type="match status" value="1"/>
</dbReference>
<dbReference type="HAMAP" id="MF_00156">
    <property type="entry name" value="PanB"/>
    <property type="match status" value="1"/>
</dbReference>
<dbReference type="InterPro" id="IPR003700">
    <property type="entry name" value="Pantoate_hydroxy_MeTrfase"/>
</dbReference>
<dbReference type="InterPro" id="IPR015813">
    <property type="entry name" value="Pyrv/PenolPyrv_kinase-like_dom"/>
</dbReference>
<dbReference type="InterPro" id="IPR040442">
    <property type="entry name" value="Pyrv_kinase-like_dom_sf"/>
</dbReference>
<dbReference type="NCBIfam" id="TIGR00222">
    <property type="entry name" value="panB"/>
    <property type="match status" value="1"/>
</dbReference>
<dbReference type="NCBIfam" id="NF001452">
    <property type="entry name" value="PRK00311.1"/>
    <property type="match status" value="1"/>
</dbReference>
<dbReference type="PANTHER" id="PTHR20881">
    <property type="entry name" value="3-METHYL-2-OXOBUTANOATE HYDROXYMETHYLTRANSFERASE"/>
    <property type="match status" value="1"/>
</dbReference>
<dbReference type="PANTHER" id="PTHR20881:SF0">
    <property type="entry name" value="3-METHYL-2-OXOBUTANOATE HYDROXYMETHYLTRANSFERASE"/>
    <property type="match status" value="1"/>
</dbReference>
<dbReference type="Pfam" id="PF02548">
    <property type="entry name" value="Pantoate_transf"/>
    <property type="match status" value="1"/>
</dbReference>
<dbReference type="PIRSF" id="PIRSF000388">
    <property type="entry name" value="Pantoate_hydroxy_MeTrfase"/>
    <property type="match status" value="1"/>
</dbReference>
<dbReference type="SUPFAM" id="SSF51621">
    <property type="entry name" value="Phosphoenolpyruvate/pyruvate domain"/>
    <property type="match status" value="1"/>
</dbReference>